<comment type="function">
    <text evidence="4">Inhibits activity of the coagulation protease factor Xa in the presence of PROZ, calcium and phospholipids. Also inhibits factor XIa in the absence of cofactors.</text>
</comment>
<comment type="subunit">
    <text evidence="4 8 9">Interacts with PROZ.</text>
</comment>
<comment type="interaction">
    <interactant intactId="EBI-3941758">
        <id>Q9UK55</id>
    </interactant>
    <interactant intactId="EBI-719750">
        <id>P00742</id>
        <label>F10</label>
    </interactant>
    <organismsDiffer>false</organismsDiffer>
    <experiments>2</experiments>
</comment>
<comment type="interaction">
    <interactant intactId="EBI-3941758">
        <id>Q9UK55</id>
    </interactant>
    <interactant intactId="EBI-22220337">
        <id>P22891</id>
        <label>PROZ</label>
    </interactant>
    <organismsDiffer>false</organismsDiffer>
    <experiments>7</experiments>
</comment>
<comment type="subcellular location">
    <subcellularLocation>
        <location>Secreted</location>
    </subcellularLocation>
</comment>
<comment type="tissue specificity">
    <text>Expressed by the liver and secreted in plasma.</text>
</comment>
<comment type="PTM">
    <text evidence="11">Phosphorylated by FAM20C in the extracellular medium.</text>
</comment>
<comment type="miscellaneous">
    <text>Heparin acts as an important cofactor, producing 20 to 100-fold accelerations of SERPINA10 reactions with factor Xa and factor XIa.</text>
</comment>
<comment type="similarity">
    <text evidence="14">Belongs to the serpin family.</text>
</comment>
<comment type="sequence caution" evidence="14">
    <conflict type="erroneous initiation">
        <sequence resource="EMBL-CDS" id="CAD62339"/>
    </conflict>
</comment>
<feature type="signal peptide" evidence="12">
    <location>
        <begin position="1"/>
        <end position="21"/>
    </location>
</feature>
<feature type="chain" id="PRO_0000032482" description="Protein Z-dependent protease inhibitor">
    <location>
        <begin position="22"/>
        <end position="444"/>
    </location>
</feature>
<feature type="region of interest" description="Disordered" evidence="2">
    <location>
        <begin position="24"/>
        <end position="65"/>
    </location>
</feature>
<feature type="region of interest" description="Heparin-binding">
    <location>
        <begin position="136"/>
        <end position="153"/>
    </location>
</feature>
<feature type="compositionally biased region" description="Basic and acidic residues" evidence="2">
    <location>
        <begin position="56"/>
        <end position="65"/>
    </location>
</feature>
<feature type="site" description="Essential for interaction with PROZ" evidence="1">
    <location>
        <position position="261"/>
    </location>
</feature>
<feature type="site" description="Essential for interaction with PROZ" evidence="1">
    <location>
        <position position="314"/>
    </location>
</feature>
<feature type="site" description="Reactive bond" evidence="1">
    <location>
        <begin position="408"/>
        <end position="409"/>
    </location>
</feature>
<feature type="modified residue" description="Phosphoserine; by FAM20C" evidence="11">
    <location>
        <position position="56"/>
    </location>
</feature>
<feature type="glycosylation site" description="N-linked (GlcNAc...) asparagine" evidence="7">
    <location>
        <position position="36"/>
    </location>
</feature>
<feature type="glycosylation site" description="N-linked (GlcNAc...) asparagine" evidence="6">
    <location>
        <position position="180"/>
    </location>
</feature>
<feature type="glycosylation site" description="N-linked (GlcNAc...) asparagine" evidence="9">
    <location>
        <position position="197"/>
    </location>
</feature>
<feature type="glycosylation site" description="N-linked (GlcNAc...) asparagine" evidence="6 9">
    <location>
        <position position="295"/>
    </location>
</feature>
<feature type="sequence variant" id="VAR_020325" description="In dbSNP:rs941590." evidence="5 13">
    <original>K</original>
    <variation>R</variation>
    <location>
        <position position="46"/>
    </location>
</feature>
<feature type="sequence variant" id="VAR_020326" description="In dbSNP:rs941591." evidence="5 13">
    <original>S</original>
    <variation>G</variation>
    <location>
        <position position="61"/>
    </location>
</feature>
<feature type="sequence variant" id="VAR_038833" description="In dbSNP:rs56137907." evidence="13">
    <original>G</original>
    <variation>R</variation>
    <location>
        <position position="139"/>
    </location>
</feature>
<feature type="sequence variant" id="VAR_051940" description="In dbSNP:rs2232699.">
    <original>L</original>
    <variation>Q</variation>
    <location>
        <position position="158"/>
    </location>
</feature>
<feature type="sequence variant" id="VAR_020327" description="In dbSNP:rs2232700." evidence="5 13">
    <original>T</original>
    <variation>S</variation>
    <location>
        <position position="161"/>
    </location>
</feature>
<feature type="sequence variant" id="VAR_051941" description="In dbSNP:rs2232701.">
    <original>R</original>
    <variation>H</variation>
    <location>
        <position position="196"/>
    </location>
</feature>
<feature type="sequence variant" id="VAR_038834" description="In dbSNP:rs2232708." evidence="13">
    <original>G</original>
    <variation>S</variation>
    <location>
        <position position="271"/>
    </location>
</feature>
<feature type="sequence variant" id="VAR_038835" evidence="13">
    <original>Q</original>
    <variation>P</variation>
    <location>
        <position position="384"/>
    </location>
</feature>
<feature type="sequence variant" id="VAR_051942" description="In dbSNP:rs2232710." evidence="5">
    <original>Q</original>
    <variation>R</variation>
    <location>
        <position position="384"/>
    </location>
</feature>
<feature type="sequence variant" id="VAR_070192" description="In dbSNP:rs546304706." evidence="10">
    <original>F</original>
    <variation>L</variation>
    <location>
        <position position="420"/>
    </location>
</feature>
<feature type="mutagenesis site" description="Loss of inhibitory activity." evidence="3">
    <original>Y</original>
    <variation>A</variation>
    <location>
        <position position="408"/>
    </location>
</feature>
<feature type="helix" evidence="16">
    <location>
        <begin position="62"/>
        <end position="93"/>
    </location>
</feature>
<feature type="strand" evidence="16">
    <location>
        <begin position="98"/>
        <end position="100"/>
    </location>
</feature>
<feature type="helix" evidence="16">
    <location>
        <begin position="102"/>
        <end position="113"/>
    </location>
</feature>
<feature type="helix" evidence="16">
    <location>
        <begin position="119"/>
        <end position="127"/>
    </location>
</feature>
<feature type="helix" evidence="15">
    <location>
        <begin position="137"/>
        <end position="139"/>
    </location>
</feature>
<feature type="helix" evidence="16">
    <location>
        <begin position="140"/>
        <end position="154"/>
    </location>
</feature>
<feature type="helix" evidence="16">
    <location>
        <begin position="156"/>
        <end position="158"/>
    </location>
</feature>
<feature type="strand" evidence="16">
    <location>
        <begin position="160"/>
        <end position="169"/>
    </location>
</feature>
<feature type="helix" evidence="16">
    <location>
        <begin position="176"/>
        <end position="186"/>
    </location>
</feature>
<feature type="strand" evidence="16">
    <location>
        <begin position="189"/>
        <end position="193"/>
    </location>
</feature>
<feature type="strand" evidence="17">
    <location>
        <begin position="195"/>
        <end position="197"/>
    </location>
</feature>
<feature type="helix" evidence="16">
    <location>
        <begin position="198"/>
        <end position="212"/>
    </location>
</feature>
<feature type="turn" evidence="16">
    <location>
        <begin position="213"/>
        <end position="215"/>
    </location>
</feature>
<feature type="strand" evidence="16">
    <location>
        <begin position="216"/>
        <end position="218"/>
    </location>
</feature>
<feature type="strand" evidence="16">
    <location>
        <begin position="228"/>
        <end position="244"/>
    </location>
</feature>
<feature type="helix" evidence="16">
    <location>
        <begin position="248"/>
        <end position="250"/>
    </location>
</feature>
<feature type="strand" evidence="16">
    <location>
        <begin position="252"/>
        <end position="261"/>
    </location>
</feature>
<feature type="strand" evidence="16">
    <location>
        <begin position="263"/>
        <end position="280"/>
    </location>
</feature>
<feature type="turn" evidence="16">
    <location>
        <begin position="281"/>
        <end position="284"/>
    </location>
</feature>
<feature type="strand" evidence="16">
    <location>
        <begin position="285"/>
        <end position="292"/>
    </location>
</feature>
<feature type="strand" evidence="16">
    <location>
        <begin position="295"/>
        <end position="304"/>
    </location>
</feature>
<feature type="strand" evidence="15">
    <location>
        <begin position="305"/>
        <end position="307"/>
    </location>
</feature>
<feature type="helix" evidence="16">
    <location>
        <begin position="312"/>
        <end position="314"/>
    </location>
</feature>
<feature type="helix" evidence="16">
    <location>
        <begin position="318"/>
        <end position="326"/>
    </location>
</feature>
<feature type="strand" evidence="16">
    <location>
        <begin position="329"/>
        <end position="338"/>
    </location>
</feature>
<feature type="strand" evidence="16">
    <location>
        <begin position="340"/>
        <end position="347"/>
    </location>
</feature>
<feature type="helix" evidence="16">
    <location>
        <begin position="349"/>
        <end position="354"/>
    </location>
</feature>
<feature type="helix" evidence="16">
    <location>
        <begin position="359"/>
        <end position="361"/>
    </location>
</feature>
<feature type="turn" evidence="16">
    <location>
        <begin position="368"/>
        <end position="370"/>
    </location>
</feature>
<feature type="strand" evidence="16">
    <location>
        <begin position="371"/>
        <end position="373"/>
    </location>
</feature>
<feature type="strand" evidence="16">
    <location>
        <begin position="378"/>
        <end position="390"/>
    </location>
</feature>
<feature type="strand" evidence="16">
    <location>
        <begin position="392"/>
        <end position="406"/>
    </location>
</feature>
<feature type="strand" evidence="16">
    <location>
        <begin position="413"/>
        <end position="415"/>
    </location>
</feature>
<feature type="strand" evidence="16">
    <location>
        <begin position="420"/>
        <end position="426"/>
    </location>
</feature>
<feature type="turn" evidence="16">
    <location>
        <begin position="427"/>
        <end position="430"/>
    </location>
</feature>
<feature type="strand" evidence="16">
    <location>
        <begin position="431"/>
        <end position="439"/>
    </location>
</feature>
<gene>
    <name type="primary">SERPINA10</name>
    <name type="synonym">ZPI</name>
    <name type="ORF">UNQ707/PRO1358</name>
</gene>
<sequence>MKVVPSLLLSVLLAQVWLVPGLAPSPQSPETPAPQNQTSRVVQAPKEEEEDEQEASEEKASEEEKAWLMASRQQLAKETSNFGFSLLRKISMRHDGNMVFSPFGMSLAMTGLMLGATGPTETQIKRGLHLQALKPTKPGLLPSLFKGLRETLSRNLELGLTQGSFAFIHKDFDVKETFFNLSKRYFDTECVPMNFRNASQAKRLMNHYINKETRGKIPKLFDEINPETKLILVDYILFKGKWLTPFDPVFTEVDTFHLDKYKTIKVPMMYGAGKFASTFDKNFRCHVLKLPYQGNATMLVVLMEKMGDHLALEDYLTTDLVETWLRNMKTRNMEVFFPKFKLDQKYEMHELLRQMGIRRIFSPFADLSELSATGRNLQVSRVLQRTVIEVDERGTEAVAGILSEITAYSMPPVIKVDRPFHFMIYEETSGMLLFLGRVVNPTLL</sequence>
<evidence type="ECO:0000250" key="1"/>
<evidence type="ECO:0000256" key="2">
    <source>
        <dbReference type="SAM" id="MobiDB-lite"/>
    </source>
</evidence>
<evidence type="ECO:0000269" key="3">
    <source>
    </source>
</evidence>
<evidence type="ECO:0000269" key="4">
    <source>
    </source>
</evidence>
<evidence type="ECO:0000269" key="5">
    <source>
    </source>
</evidence>
<evidence type="ECO:0000269" key="6">
    <source>
    </source>
</evidence>
<evidence type="ECO:0000269" key="7">
    <source>
    </source>
</evidence>
<evidence type="ECO:0000269" key="8">
    <source>
    </source>
</evidence>
<evidence type="ECO:0000269" key="9">
    <source>
    </source>
</evidence>
<evidence type="ECO:0000269" key="10">
    <source>
    </source>
</evidence>
<evidence type="ECO:0000269" key="11">
    <source>
    </source>
</evidence>
<evidence type="ECO:0000269" key="12">
    <source>
    </source>
</evidence>
<evidence type="ECO:0000269" key="13">
    <source ref="4"/>
</evidence>
<evidence type="ECO:0000305" key="14"/>
<evidence type="ECO:0007829" key="15">
    <source>
        <dbReference type="PDB" id="3H5C"/>
    </source>
</evidence>
<evidence type="ECO:0007829" key="16">
    <source>
        <dbReference type="PDB" id="4AFX"/>
    </source>
</evidence>
<evidence type="ECO:0007829" key="17">
    <source>
        <dbReference type="PDB" id="4AJU"/>
    </source>
</evidence>
<protein>
    <recommendedName>
        <fullName>Protein Z-dependent protease inhibitor</fullName>
        <shortName>PZ-dependent protease inhibitor</shortName>
        <shortName>PZI</shortName>
    </recommendedName>
    <alternativeName>
        <fullName>Serpin A10</fullName>
    </alternativeName>
</protein>
<reference key="1">
    <citation type="journal article" date="1999" name="Biochemistry">
        <title>The protein Z-dependent protease inhibitor is a serpin.</title>
        <authorList>
            <person name="Han X."/>
            <person name="Huang Z.-F."/>
            <person name="Fiehler R."/>
            <person name="Broze G.J. Jr."/>
        </authorList>
    </citation>
    <scope>NUCLEOTIDE SEQUENCE [MRNA]</scope>
    <scope>MUTAGENESIS OF TYR-408</scope>
    <source>
        <tissue>Liver</tissue>
    </source>
</reference>
<reference key="2">
    <citation type="journal article" date="2003" name="Genome Res.">
        <title>The secreted protein discovery initiative (SPDI), a large-scale effort to identify novel human secreted and transmembrane proteins: a bioinformatics assessment.</title>
        <authorList>
            <person name="Clark H.F."/>
            <person name="Gurney A.L."/>
            <person name="Abaya E."/>
            <person name="Baker K."/>
            <person name="Baldwin D.T."/>
            <person name="Brush J."/>
            <person name="Chen J."/>
            <person name="Chow B."/>
            <person name="Chui C."/>
            <person name="Crowley C."/>
            <person name="Currell B."/>
            <person name="Deuel B."/>
            <person name="Dowd P."/>
            <person name="Eaton D."/>
            <person name="Foster J.S."/>
            <person name="Grimaldi C."/>
            <person name="Gu Q."/>
            <person name="Hass P.E."/>
            <person name="Heldens S."/>
            <person name="Huang A."/>
            <person name="Kim H.S."/>
            <person name="Klimowski L."/>
            <person name="Jin Y."/>
            <person name="Johnson S."/>
            <person name="Lee J."/>
            <person name="Lewis L."/>
            <person name="Liao D."/>
            <person name="Mark M.R."/>
            <person name="Robbie E."/>
            <person name="Sanchez C."/>
            <person name="Schoenfeld J."/>
            <person name="Seshagiri S."/>
            <person name="Simmons L."/>
            <person name="Singh J."/>
            <person name="Smith V."/>
            <person name="Stinson J."/>
            <person name="Vagts A."/>
            <person name="Vandlen R.L."/>
            <person name="Watanabe C."/>
            <person name="Wieand D."/>
            <person name="Woods K."/>
            <person name="Xie M.-H."/>
            <person name="Yansura D.G."/>
            <person name="Yi S."/>
            <person name="Yu G."/>
            <person name="Yuan J."/>
            <person name="Zhang M."/>
            <person name="Zhang Z."/>
            <person name="Goddard A.D."/>
            <person name="Wood W.I."/>
            <person name="Godowski P.J."/>
            <person name="Gray A.M."/>
        </authorList>
    </citation>
    <scope>NUCLEOTIDE SEQUENCE [LARGE SCALE MRNA]</scope>
    <scope>VARIANTS ARG-46; GLY-61; SER-161 AND ARG-384</scope>
</reference>
<reference key="3">
    <citation type="submission" date="2003-02" db="EMBL/GenBank/DDBJ databases">
        <title>Full-length cDNA libraries and normalization.</title>
        <authorList>
            <person name="Li W.B."/>
            <person name="Gruber C."/>
            <person name="Jessee J."/>
            <person name="Polayes D."/>
        </authorList>
    </citation>
    <scope>NUCLEOTIDE SEQUENCE [LARGE SCALE MRNA]</scope>
    <source>
        <tissue>Fetal liver</tissue>
    </source>
</reference>
<reference key="4">
    <citation type="submission" date="2007-05" db="EMBL/GenBank/DDBJ databases">
        <authorList>
            <consortium name="SeattleSNPs variation discovery resource"/>
        </authorList>
    </citation>
    <scope>NUCLEOTIDE SEQUENCE [GENOMIC DNA]</scope>
    <scope>VARIANTS ARG-46; GLY-61; ARG-139; SER-161; SER-271 AND PRO-384</scope>
</reference>
<reference key="5">
    <citation type="journal article" date="2004" name="Genome Res.">
        <title>The status, quality, and expansion of the NIH full-length cDNA project: the Mammalian Gene Collection (MGC).</title>
        <authorList>
            <consortium name="The MGC Project Team"/>
        </authorList>
    </citation>
    <scope>NUCLEOTIDE SEQUENCE [LARGE SCALE MRNA]</scope>
    <source>
        <tissue>Liver</tissue>
    </source>
</reference>
<reference key="6">
    <citation type="journal article" date="1998" name="Proc. Natl. Acad. Sci. U.S.A.">
        <title>Isolation of a protein Z-dependent plasma protease inhibitor.</title>
        <authorList>
            <person name="Han X."/>
            <person name="Fiehler R."/>
            <person name="Broze G.J. Jr."/>
        </authorList>
    </citation>
    <scope>PROTEIN SEQUENCE OF 22-33</scope>
    <scope>CHARACTERIZATION</scope>
    <source>
        <tissue>Plasma</tissue>
    </source>
</reference>
<reference key="7">
    <citation type="journal article" date="2000" name="Blood">
        <title>Characterization of the protein Z-dependent protease inhibitor.</title>
        <authorList>
            <person name="Han X."/>
            <person name="Fiehler R."/>
            <person name="Broze G.J. Jr."/>
        </authorList>
    </citation>
    <scope>FUNCTION</scope>
    <scope>INTERACTION WITH PROZ</scope>
</reference>
<reference key="8">
    <citation type="journal article" date="2005" name="J. Proteome Res.">
        <title>Human plasma N-glycoproteome analysis by immunoaffinity subtraction, hydrazide chemistry, and mass spectrometry.</title>
        <authorList>
            <person name="Liu T."/>
            <person name="Qian W.-J."/>
            <person name="Gritsenko M.A."/>
            <person name="Camp D.G. II"/>
            <person name="Monroe M.E."/>
            <person name="Moore R.J."/>
            <person name="Smith R.D."/>
        </authorList>
    </citation>
    <scope>GLYCOSYLATION [LARGE SCALE ANALYSIS] AT ASN-180 AND ASN-295</scope>
    <source>
        <tissue>Plasma</tissue>
    </source>
</reference>
<reference key="9">
    <citation type="journal article" date="2009" name="J. Proteome Res.">
        <title>Glycoproteomics analysis of human liver tissue by combination of multiple enzyme digestion and hydrazide chemistry.</title>
        <authorList>
            <person name="Chen R."/>
            <person name="Jiang X."/>
            <person name="Sun D."/>
            <person name="Han G."/>
            <person name="Wang F."/>
            <person name="Ye M."/>
            <person name="Wang L."/>
            <person name="Zou H."/>
        </authorList>
    </citation>
    <scope>GLYCOSYLATION [LARGE SCALE ANALYSIS] AT ASN-36</scope>
    <source>
        <tissue>Liver</tissue>
    </source>
</reference>
<reference key="10">
    <citation type="journal article" date="2012" name="Biochemistry">
        <title>Characterization of the heparin-binding site of the protein z-dependent protease inhibitor.</title>
        <authorList>
            <person name="Yang L."/>
            <person name="Ding Q."/>
            <person name="Huang X."/>
            <person name="Olson S.T."/>
            <person name="Rezaie A.R."/>
        </authorList>
    </citation>
    <scope>HEPARIN-BINDING REGION</scope>
</reference>
<reference key="11">
    <citation type="journal article" date="2015" name="Cell">
        <title>A single kinase generates the majority of the secreted phosphoproteome.</title>
        <authorList>
            <person name="Tagliabracci V.S."/>
            <person name="Wiley S.E."/>
            <person name="Guo X."/>
            <person name="Kinch L.N."/>
            <person name="Durrant E."/>
            <person name="Wen J."/>
            <person name="Xiao J."/>
            <person name="Cui J."/>
            <person name="Nguyen K.B."/>
            <person name="Engel J.L."/>
            <person name="Coon J.J."/>
            <person name="Grishin N."/>
            <person name="Pinna L.A."/>
            <person name="Pagliarini D.J."/>
            <person name="Dixon J.E."/>
        </authorList>
    </citation>
    <scope>PHOSPHORYLATION AT SER-56</scope>
</reference>
<reference key="12">
    <citation type="journal article" date="2009" name="Blood">
        <title>Crystal structure of protein Z-dependent inhibitor complex shows how protein Z functions as a cofactor in the membrane inhibition of factor X.</title>
        <authorList>
            <person name="Wei Z."/>
            <person name="Yan Y."/>
            <person name="Carrell R.W."/>
            <person name="Zhou A."/>
        </authorList>
    </citation>
    <scope>X-RAY CRYSTALLOGRAPHY (2.3 ANGSTROMS) OF 60-444 IN COMPLEX WITH PROZ</scope>
</reference>
<reference key="13">
    <citation type="journal article" date="2010" name="J. Biol. Chem.">
        <title>Basis for the specificity and activation of the serpin protein Z-dependent proteinase inhibitor (ZPI) as an inhibitor of membrane-associated factor Xa.</title>
        <authorList>
            <person name="Huang X."/>
            <person name="Dementiev A."/>
            <person name="Olson S.T."/>
            <person name="Gettins P.G."/>
        </authorList>
    </citation>
    <scope>X-RAY CRYSTALLOGRAPHY (3.26 ANGSTROMS) OF 22-444 IN COMPLEX WITH PROZ</scope>
    <scope>GLYCOSYLATION AT ASN-197 AND ASN-295</scope>
    <scope>SUBUNIT</scope>
</reference>
<reference key="14">
    <citation type="journal article" date="2013" name="Am. J. Hum. Genet.">
        <title>Identification of mutations in SLC24A4, encoding a potassium-dependent sodium/calcium exchanger, as a cause of amelogenesis imperfecta.</title>
        <authorList>
            <person name="Parry D.A."/>
            <person name="Poulter J.A."/>
            <person name="Logan C.V."/>
            <person name="Brookes S.J."/>
            <person name="Jafri H."/>
            <person name="Ferguson C.H."/>
            <person name="Anwari B.M."/>
            <person name="Rashid Y."/>
            <person name="Zhao H."/>
            <person name="Johnson C.A."/>
            <person name="Inglehearn C.F."/>
            <person name="Mighell A.J."/>
        </authorList>
    </citation>
    <scope>VARIANT LEU-420</scope>
</reference>
<accession>Q9UK55</accession>
<accession>A5Z2A5</accession>
<accession>Q6UWX9</accession>
<accession>Q86U20</accession>
<dbReference type="EMBL" id="AF181467">
    <property type="protein sequence ID" value="AAD53962.1"/>
    <property type="molecule type" value="mRNA"/>
</dbReference>
<dbReference type="EMBL" id="AY358597">
    <property type="protein sequence ID" value="AAQ88960.1"/>
    <property type="molecule type" value="mRNA"/>
</dbReference>
<dbReference type="EMBL" id="BX248011">
    <property type="protein sequence ID" value="CAD62339.1"/>
    <property type="status" value="ALT_INIT"/>
    <property type="molecule type" value="mRNA"/>
</dbReference>
<dbReference type="EMBL" id="EF621762">
    <property type="protein sequence ID" value="ABR09269.1"/>
    <property type="molecule type" value="Genomic_DNA"/>
</dbReference>
<dbReference type="EMBL" id="BC022261">
    <property type="protein sequence ID" value="AAH22261.1"/>
    <property type="molecule type" value="mRNA"/>
</dbReference>
<dbReference type="CCDS" id="CCDS9923.1"/>
<dbReference type="RefSeq" id="NP_001094077.1">
    <property type="nucleotide sequence ID" value="NM_001100607.3"/>
</dbReference>
<dbReference type="RefSeq" id="NP_057270.1">
    <property type="nucleotide sequence ID" value="NM_016186.3"/>
</dbReference>
<dbReference type="RefSeq" id="XP_005267790.1">
    <property type="nucleotide sequence ID" value="XM_005267733.6"/>
</dbReference>
<dbReference type="RefSeq" id="XP_054184954.1">
    <property type="nucleotide sequence ID" value="XM_054328979.1"/>
</dbReference>
<dbReference type="PDB" id="3F1S">
    <property type="method" value="X-ray"/>
    <property type="resolution" value="2.30 A"/>
    <property type="chains" value="A=60-444"/>
</dbReference>
<dbReference type="PDB" id="3H5C">
    <property type="method" value="X-ray"/>
    <property type="resolution" value="3.26 A"/>
    <property type="chains" value="A=22-444"/>
</dbReference>
<dbReference type="PDB" id="4AFX">
    <property type="method" value="X-ray"/>
    <property type="resolution" value="2.09 A"/>
    <property type="chains" value="A=23-408, B=409-444"/>
</dbReference>
<dbReference type="PDB" id="4AJU">
    <property type="method" value="X-ray"/>
    <property type="resolution" value="2.65 A"/>
    <property type="chains" value="A=23-408, B=409-444"/>
</dbReference>
<dbReference type="PDBsum" id="3F1S"/>
<dbReference type="PDBsum" id="3H5C"/>
<dbReference type="PDBsum" id="4AFX"/>
<dbReference type="PDBsum" id="4AJU"/>
<dbReference type="SMR" id="Q9UK55"/>
<dbReference type="BioGRID" id="119339">
    <property type="interactions" value="16"/>
</dbReference>
<dbReference type="FunCoup" id="Q9UK55">
    <property type="interactions" value="119"/>
</dbReference>
<dbReference type="IntAct" id="Q9UK55">
    <property type="interactions" value="20"/>
</dbReference>
<dbReference type="STRING" id="9606.ENSP00000261994"/>
<dbReference type="MEROPS" id="I04.005"/>
<dbReference type="GlyConnect" id="1673">
    <property type="glycosylation" value="8 N-Linked glycans (3 sites)"/>
</dbReference>
<dbReference type="GlyCosmos" id="Q9UK55">
    <property type="glycosylation" value="4 sites, 10 glycans"/>
</dbReference>
<dbReference type="GlyGen" id="Q9UK55">
    <property type="glycosylation" value="5 sites, 27 N-linked glycans (3 sites)"/>
</dbReference>
<dbReference type="iPTMnet" id="Q9UK55"/>
<dbReference type="PhosphoSitePlus" id="Q9UK55"/>
<dbReference type="BioMuta" id="SERPINA10"/>
<dbReference type="DMDM" id="12585541"/>
<dbReference type="CPTAC" id="non-CPTAC-2690"/>
<dbReference type="jPOST" id="Q9UK55"/>
<dbReference type="MassIVE" id="Q9UK55"/>
<dbReference type="PaxDb" id="9606-ENSP00000261994"/>
<dbReference type="PeptideAtlas" id="Q9UK55"/>
<dbReference type="ProteomicsDB" id="84723"/>
<dbReference type="Antibodypedia" id="27029">
    <property type="antibodies" value="348 antibodies from 38 providers"/>
</dbReference>
<dbReference type="DNASU" id="51156"/>
<dbReference type="Ensembl" id="ENST00000261994.9">
    <property type="protein sequence ID" value="ENSP00000261994.4"/>
    <property type="gene ID" value="ENSG00000140093.10"/>
</dbReference>
<dbReference type="Ensembl" id="ENST00000393096.5">
    <property type="protein sequence ID" value="ENSP00000376809.1"/>
    <property type="gene ID" value="ENSG00000140093.10"/>
</dbReference>
<dbReference type="Ensembl" id="ENST00000554173.1">
    <property type="protein sequence ID" value="ENSP00000450971.1"/>
    <property type="gene ID" value="ENSG00000140093.10"/>
</dbReference>
<dbReference type="Ensembl" id="ENST00000614630.4">
    <property type="protein sequence ID" value="ENSP00000484632.1"/>
    <property type="gene ID" value="ENSG00000278767.4"/>
</dbReference>
<dbReference type="GeneID" id="51156"/>
<dbReference type="KEGG" id="hsa:51156"/>
<dbReference type="MANE-Select" id="ENST00000261994.9">
    <property type="protein sequence ID" value="ENSP00000261994.4"/>
    <property type="RefSeq nucleotide sequence ID" value="NM_001100607.3"/>
    <property type="RefSeq protein sequence ID" value="NP_001094077.1"/>
</dbReference>
<dbReference type="UCSC" id="uc001ycu.6">
    <property type="organism name" value="human"/>
</dbReference>
<dbReference type="AGR" id="HGNC:15996"/>
<dbReference type="CTD" id="51156"/>
<dbReference type="DisGeNET" id="51156"/>
<dbReference type="GeneCards" id="SERPINA10"/>
<dbReference type="HGNC" id="HGNC:15996">
    <property type="gene designation" value="SERPINA10"/>
</dbReference>
<dbReference type="HPA" id="ENSG00000140093">
    <property type="expression patterns" value="Tissue enriched (liver)"/>
</dbReference>
<dbReference type="MalaCards" id="SERPINA10"/>
<dbReference type="MIM" id="602455">
    <property type="type" value="gene"/>
</dbReference>
<dbReference type="MIM" id="605271">
    <property type="type" value="gene+phenotype"/>
</dbReference>
<dbReference type="neXtProt" id="NX_Q9UK55"/>
<dbReference type="OpenTargets" id="ENSG00000140093"/>
<dbReference type="PharmGKB" id="PA38078"/>
<dbReference type="VEuPathDB" id="HostDB:ENSG00000140093"/>
<dbReference type="eggNOG" id="KOG2392">
    <property type="taxonomic scope" value="Eukaryota"/>
</dbReference>
<dbReference type="GeneTree" id="ENSGT00940000159462"/>
<dbReference type="HOGENOM" id="CLU_023330_2_1_1"/>
<dbReference type="InParanoid" id="Q9UK55"/>
<dbReference type="OrthoDB" id="10063692at2759"/>
<dbReference type="PAN-GO" id="Q9UK55">
    <property type="GO annotations" value="3 GO annotations based on evolutionary models"/>
</dbReference>
<dbReference type="PhylomeDB" id="Q9UK55"/>
<dbReference type="TreeFam" id="TF343094"/>
<dbReference type="PathwayCommons" id="Q9UK55"/>
<dbReference type="Reactome" id="R-HSA-381426">
    <property type="pathway name" value="Regulation of Insulin-like Growth Factor (IGF) transport and uptake by Insulin-like Growth Factor Binding Proteins (IGFBPs)"/>
</dbReference>
<dbReference type="Reactome" id="R-HSA-8957275">
    <property type="pathway name" value="Post-translational protein phosphorylation"/>
</dbReference>
<dbReference type="SignaLink" id="Q9UK55"/>
<dbReference type="BioGRID-ORCS" id="51156">
    <property type="hits" value="10 hits in 1139 CRISPR screens"/>
</dbReference>
<dbReference type="EvolutionaryTrace" id="Q9UK55"/>
<dbReference type="GenomeRNAi" id="51156"/>
<dbReference type="Pharos" id="Q9UK55">
    <property type="development level" value="Tbio"/>
</dbReference>
<dbReference type="PRO" id="PR:Q9UK55"/>
<dbReference type="Proteomes" id="UP000005640">
    <property type="component" value="Chromosome 14"/>
</dbReference>
<dbReference type="RNAct" id="Q9UK55">
    <property type="molecule type" value="protein"/>
</dbReference>
<dbReference type="Bgee" id="ENSG00000140093">
    <property type="expression patterns" value="Expressed in right lobe of liver and 78 other cell types or tissues"/>
</dbReference>
<dbReference type="ExpressionAtlas" id="Q9UK55">
    <property type="expression patterns" value="baseline and differential"/>
</dbReference>
<dbReference type="GO" id="GO:0005788">
    <property type="term" value="C:endoplasmic reticulum lumen"/>
    <property type="evidence" value="ECO:0000304"/>
    <property type="project" value="Reactome"/>
</dbReference>
<dbReference type="GO" id="GO:0070062">
    <property type="term" value="C:extracellular exosome"/>
    <property type="evidence" value="ECO:0007005"/>
    <property type="project" value="UniProtKB"/>
</dbReference>
<dbReference type="GO" id="GO:0005615">
    <property type="term" value="C:extracellular space"/>
    <property type="evidence" value="ECO:0000318"/>
    <property type="project" value="GO_Central"/>
</dbReference>
<dbReference type="GO" id="GO:0008201">
    <property type="term" value="F:heparin binding"/>
    <property type="evidence" value="ECO:0007669"/>
    <property type="project" value="UniProtKB-KW"/>
</dbReference>
<dbReference type="GO" id="GO:0004867">
    <property type="term" value="F:serine-type endopeptidase inhibitor activity"/>
    <property type="evidence" value="ECO:0000318"/>
    <property type="project" value="GO_Central"/>
</dbReference>
<dbReference type="GO" id="GO:0007596">
    <property type="term" value="P:blood coagulation"/>
    <property type="evidence" value="ECO:0007669"/>
    <property type="project" value="UniProtKB-KW"/>
</dbReference>
<dbReference type="CDD" id="cd02055">
    <property type="entry name" value="serpinA10_PZI"/>
    <property type="match status" value="1"/>
</dbReference>
<dbReference type="FunFam" id="3.30.497.10:FF:000001">
    <property type="entry name" value="Serine protease inhibitor"/>
    <property type="match status" value="1"/>
</dbReference>
<dbReference type="Gene3D" id="2.30.39.10">
    <property type="entry name" value="Alpha-1-antitrypsin, domain 1"/>
    <property type="match status" value="1"/>
</dbReference>
<dbReference type="Gene3D" id="3.30.497.10">
    <property type="entry name" value="Antithrombin, subunit I, domain 2"/>
    <property type="match status" value="1"/>
</dbReference>
<dbReference type="InterPro" id="IPR033835">
    <property type="entry name" value="PZI_serpin_dom"/>
</dbReference>
<dbReference type="InterPro" id="IPR023796">
    <property type="entry name" value="Serpin_dom"/>
</dbReference>
<dbReference type="InterPro" id="IPR000215">
    <property type="entry name" value="Serpin_fam"/>
</dbReference>
<dbReference type="InterPro" id="IPR036186">
    <property type="entry name" value="Serpin_sf"/>
</dbReference>
<dbReference type="InterPro" id="IPR042178">
    <property type="entry name" value="Serpin_sf_1"/>
</dbReference>
<dbReference type="InterPro" id="IPR042185">
    <property type="entry name" value="Serpin_sf_2"/>
</dbReference>
<dbReference type="PANTHER" id="PTHR11461:SF191">
    <property type="entry name" value="PROTEIN Z-DEPENDENT PROTEASE INHIBITOR"/>
    <property type="match status" value="1"/>
</dbReference>
<dbReference type="PANTHER" id="PTHR11461">
    <property type="entry name" value="SERINE PROTEASE INHIBITOR, SERPIN"/>
    <property type="match status" value="1"/>
</dbReference>
<dbReference type="Pfam" id="PF00079">
    <property type="entry name" value="Serpin"/>
    <property type="match status" value="1"/>
</dbReference>
<dbReference type="SMART" id="SM00093">
    <property type="entry name" value="SERPIN"/>
    <property type="match status" value="1"/>
</dbReference>
<dbReference type="SUPFAM" id="SSF56574">
    <property type="entry name" value="Serpins"/>
    <property type="match status" value="1"/>
</dbReference>
<name>ZPI_HUMAN</name>
<organism>
    <name type="scientific">Homo sapiens</name>
    <name type="common">Human</name>
    <dbReference type="NCBI Taxonomy" id="9606"/>
    <lineage>
        <taxon>Eukaryota</taxon>
        <taxon>Metazoa</taxon>
        <taxon>Chordata</taxon>
        <taxon>Craniata</taxon>
        <taxon>Vertebrata</taxon>
        <taxon>Euteleostomi</taxon>
        <taxon>Mammalia</taxon>
        <taxon>Eutheria</taxon>
        <taxon>Euarchontoglires</taxon>
        <taxon>Primates</taxon>
        <taxon>Haplorrhini</taxon>
        <taxon>Catarrhini</taxon>
        <taxon>Hominidae</taxon>
        <taxon>Homo</taxon>
    </lineage>
</organism>
<keyword id="KW-0002">3D-structure</keyword>
<keyword id="KW-0094">Blood coagulation</keyword>
<keyword id="KW-0903">Direct protein sequencing</keyword>
<keyword id="KW-0325">Glycoprotein</keyword>
<keyword id="KW-0356">Hemostasis</keyword>
<keyword id="KW-0358">Heparin-binding</keyword>
<keyword id="KW-0597">Phosphoprotein</keyword>
<keyword id="KW-0646">Protease inhibitor</keyword>
<keyword id="KW-1267">Proteomics identification</keyword>
<keyword id="KW-1185">Reference proteome</keyword>
<keyword id="KW-0964">Secreted</keyword>
<keyword id="KW-0722">Serine protease inhibitor</keyword>
<keyword id="KW-0732">Signal</keyword>
<proteinExistence type="evidence at protein level"/>